<accession>Q3C1A6</accession>
<evidence type="ECO:0000250" key="1"/>
<evidence type="ECO:0000255" key="2">
    <source>
        <dbReference type="PROSITE-ProRule" id="PRU10008"/>
    </source>
</evidence>
<evidence type="ECO:0000269" key="3">
    <source>
    </source>
</evidence>
<evidence type="ECO:0000305" key="4"/>
<name>GAPN_STREI</name>
<feature type="chain" id="PRO_0000331318" description="NADP-dependent glyceraldehyde-3-phosphate dehydrogenase">
    <location>
        <begin position="1"/>
        <end position="476"/>
    </location>
</feature>
<feature type="active site" evidence="2">
    <location>
        <position position="250"/>
    </location>
</feature>
<feature type="active site" evidence="2">
    <location>
        <position position="284"/>
    </location>
</feature>
<feature type="binding site" evidence="1">
    <location>
        <position position="103"/>
    </location>
    <ligand>
        <name>substrate</name>
    </ligand>
</feature>
<feature type="binding site" evidence="1">
    <location>
        <position position="151"/>
    </location>
    <ligand>
        <name>NADP(+)</name>
        <dbReference type="ChEBI" id="CHEBI:58349"/>
    </ligand>
</feature>
<feature type="binding site" evidence="1">
    <location>
        <begin position="154"/>
        <end position="155"/>
    </location>
    <ligand>
        <name>substrate</name>
    </ligand>
</feature>
<feature type="binding site" evidence="1">
    <location>
        <position position="177"/>
    </location>
    <ligand>
        <name>NADP(+)</name>
        <dbReference type="ChEBI" id="CHEBI:58349"/>
    </ligand>
</feature>
<feature type="binding site" evidence="1">
    <location>
        <position position="180"/>
    </location>
    <ligand>
        <name>NADP(+)</name>
        <dbReference type="ChEBI" id="CHEBI:58349"/>
    </ligand>
</feature>
<feature type="binding site" evidence="1">
    <location>
        <position position="215"/>
    </location>
    <ligand>
        <name>NADP(+)</name>
        <dbReference type="ChEBI" id="CHEBI:58349"/>
    </ligand>
</feature>
<feature type="binding site" evidence="1">
    <location>
        <begin position="230"/>
        <end position="251"/>
    </location>
    <ligand>
        <name>NADP(+)</name>
        <dbReference type="ChEBI" id="CHEBI:58349"/>
    </ligand>
</feature>
<feature type="binding site" evidence="1">
    <location>
        <begin position="283"/>
        <end position="285"/>
    </location>
    <ligand>
        <name>substrate</name>
    </ligand>
</feature>
<feature type="binding site" evidence="1">
    <location>
        <position position="377"/>
    </location>
    <ligand>
        <name>NADP(+)</name>
        <dbReference type="ChEBI" id="CHEBI:58349"/>
    </ligand>
</feature>
<feature type="binding site" evidence="1">
    <location>
        <position position="437"/>
    </location>
    <ligand>
        <name>substrate</name>
    </ligand>
</feature>
<reference key="1">
    <citation type="journal article" date="2006" name="FEMS Microbiol. Lett.">
        <title>Presence of NADP(+)-specific glyceraldehyde-3-phosphate dehydrogenase and CcpA-dependent transcription of its gene in the ruminal bacterium Streptococcus bovis.</title>
        <authorList>
            <person name="Asanuma N."/>
            <person name="Hino T."/>
        </authorList>
    </citation>
    <scope>NUCLEOTIDE SEQUENCE [GENOMIC DNA]</scope>
    <scope>FUNCTION</scope>
    <scope>CATALYTIC ACTIVITY</scope>
    <scope>BIOPHYSICOCHEMICAL PROPERTIES</scope>
    <scope>TRANSCRIPTIONAL REGULATION</scope>
    <source>
        <strain>ATCC 700410 / JB1</strain>
    </source>
</reference>
<dbReference type="EC" id="1.2.1.9"/>
<dbReference type="EMBL" id="AB239335">
    <property type="protein sequence ID" value="BAE46989.1"/>
    <property type="molecule type" value="Genomic_DNA"/>
</dbReference>
<dbReference type="RefSeq" id="WP_039697176.1">
    <property type="nucleotide sequence ID" value="NZ_FNKE01000001.1"/>
</dbReference>
<dbReference type="SMR" id="Q3C1A6"/>
<dbReference type="STRING" id="1335.A6J79_06900"/>
<dbReference type="OrthoDB" id="9762913at2"/>
<dbReference type="BRENDA" id="1.2.1.9">
    <property type="organism ID" value="5919"/>
</dbReference>
<dbReference type="GO" id="GO:0008886">
    <property type="term" value="F:glyceraldehyde-3-phosphate dehydrogenase (NADP+) (non-phosphorylating) activity"/>
    <property type="evidence" value="ECO:0007669"/>
    <property type="project" value="UniProtKB-EC"/>
</dbReference>
<dbReference type="GO" id="GO:0008911">
    <property type="term" value="F:lactaldehyde dehydrogenase (NAD+) activity"/>
    <property type="evidence" value="ECO:0007669"/>
    <property type="project" value="TreeGrafter"/>
</dbReference>
<dbReference type="CDD" id="cd07082">
    <property type="entry name" value="ALDH_F11_NP-GAPDH"/>
    <property type="match status" value="1"/>
</dbReference>
<dbReference type="FunFam" id="3.40.309.10:FF:000022">
    <property type="entry name" value="NADP-dependent glyceraldehyde-3-phosphate dehydrogenase"/>
    <property type="match status" value="1"/>
</dbReference>
<dbReference type="FunFam" id="3.40.605.10:FF:000025">
    <property type="entry name" value="NADP-dependent glyceraldehyde-3-phosphate dehydrogenase"/>
    <property type="match status" value="1"/>
</dbReference>
<dbReference type="Gene3D" id="3.40.605.10">
    <property type="entry name" value="Aldehyde Dehydrogenase, Chain A, domain 1"/>
    <property type="match status" value="1"/>
</dbReference>
<dbReference type="Gene3D" id="3.40.309.10">
    <property type="entry name" value="Aldehyde Dehydrogenase, Chain A, domain 2"/>
    <property type="match status" value="1"/>
</dbReference>
<dbReference type="InterPro" id="IPR016161">
    <property type="entry name" value="Ald_DH/histidinol_DH"/>
</dbReference>
<dbReference type="InterPro" id="IPR016163">
    <property type="entry name" value="Ald_DH_C"/>
</dbReference>
<dbReference type="InterPro" id="IPR016160">
    <property type="entry name" value="Ald_DH_CS_CYS"/>
</dbReference>
<dbReference type="InterPro" id="IPR016162">
    <property type="entry name" value="Ald_DH_N"/>
</dbReference>
<dbReference type="InterPro" id="IPR015590">
    <property type="entry name" value="Aldehyde_DH_dom"/>
</dbReference>
<dbReference type="InterPro" id="IPR051020">
    <property type="entry name" value="ALDH-related_metabolic_enz"/>
</dbReference>
<dbReference type="PANTHER" id="PTHR42991">
    <property type="entry name" value="ALDEHYDE DEHYDROGENASE"/>
    <property type="match status" value="1"/>
</dbReference>
<dbReference type="PANTHER" id="PTHR42991:SF1">
    <property type="entry name" value="ALDEHYDE DEHYDROGENASE"/>
    <property type="match status" value="1"/>
</dbReference>
<dbReference type="Pfam" id="PF00171">
    <property type="entry name" value="Aldedh"/>
    <property type="match status" value="1"/>
</dbReference>
<dbReference type="SUPFAM" id="SSF53720">
    <property type="entry name" value="ALDH-like"/>
    <property type="match status" value="1"/>
</dbReference>
<dbReference type="PROSITE" id="PS00070">
    <property type="entry name" value="ALDEHYDE_DEHYDR_CYS"/>
    <property type="match status" value="1"/>
</dbReference>
<proteinExistence type="evidence at protein level"/>
<sequence length="476" mass="51192">MTKQYKNYVNGEWKLSKEEIKIYAPATGEELGSVPAMSQEEVDYVYASAKAAQKAWRALSYVERAEYLHKAADILMRDAEKIGAVLSKEIAKGYKSAVGEVIRTAEIINYAAEEGVRLEGEVLEGGSFDPASKKKIAIVRREPVGLVLAISPFNYPINLAGSKIAPALISGNVVALKPPTQGSISGLLLAEAFAEAGLPAGVFNTITGRGSVIGDYIVEHEAVNYINFTGSTPVGEHIGHLAGMRPIMLELGGKDSAIILEDADLDLAAKNIVAGAYGYSGQRCTAVKRVLVMDSIADKLVEKVSALVNNLTVGMPEDNADITPLIDTKAADYVEGLIKDAQEKGAKEVISFKREGNLISPVLFDNVTTDMRLAWEEPFGPVLPFIRVNSVEEAIEISNKSEYGLQASVFTNNFPLAFKIAEQLEVGTVHINNKTQRGTDNFPFLGAKKSGAGVQGVKYSIEAMTTVKSTVFDIAK</sequence>
<protein>
    <recommendedName>
        <fullName>NADP-dependent glyceraldehyde-3-phosphate dehydrogenase</fullName>
        <ecNumber>1.2.1.9</ecNumber>
    </recommendedName>
    <alternativeName>
        <fullName>Glyceraldehyde-3-phosphate dehydrogenase [NADP(+)]</fullName>
        <shortName>GAPN</shortName>
    </alternativeName>
    <alternativeName>
        <fullName>Non-phosphorylating glyceraldehyde 3-phosphate dehydrogenase</fullName>
    </alternativeName>
    <alternativeName>
        <fullName>Triosephosphate dehydrogenase</fullName>
    </alternativeName>
</protein>
<organism>
    <name type="scientific">Streptococcus equinus</name>
    <name type="common">Streptococcus bovis</name>
    <dbReference type="NCBI Taxonomy" id="1335"/>
    <lineage>
        <taxon>Bacteria</taxon>
        <taxon>Bacillati</taxon>
        <taxon>Bacillota</taxon>
        <taxon>Bacilli</taxon>
        <taxon>Lactobacillales</taxon>
        <taxon>Streptococcaceae</taxon>
        <taxon>Streptococcus</taxon>
    </lineage>
</organism>
<keyword id="KW-0521">NADP</keyword>
<keyword id="KW-0560">Oxidoreductase</keyword>
<gene>
    <name type="primary">gapN</name>
</gene>
<comment type="function">
    <text evidence="3">Catalyzes the irreversible NADP-dependent oxidation of glyceraldehyde-3-phosphate to 3-phosphoglycerate. Is not able to use NAD instead of NADP. May play an important role in NADPH production in S.equinus.</text>
</comment>
<comment type="catalytic activity">
    <reaction evidence="3">
        <text>D-glyceraldehyde 3-phosphate + NADP(+) + H2O = (2R)-3-phosphoglycerate + NADPH + 2 H(+)</text>
        <dbReference type="Rhea" id="RHEA:14669"/>
        <dbReference type="ChEBI" id="CHEBI:15377"/>
        <dbReference type="ChEBI" id="CHEBI:15378"/>
        <dbReference type="ChEBI" id="CHEBI:57783"/>
        <dbReference type="ChEBI" id="CHEBI:58272"/>
        <dbReference type="ChEBI" id="CHEBI:58349"/>
        <dbReference type="ChEBI" id="CHEBI:59776"/>
        <dbReference type="EC" id="1.2.1.9"/>
    </reaction>
</comment>
<comment type="biophysicochemical properties">
    <phDependence>
        <text evidence="3">Optimum pH is 8.5.</text>
    </phDependence>
    <temperatureDependence>
        <text evidence="3">Optimum temperature is 60 degrees Celsius.</text>
    </temperatureDependence>
</comment>
<comment type="subunit">
    <text evidence="1">Homotetramer.</text>
</comment>
<comment type="induction">
    <text evidence="3">Up-regulated by the catabolite control protein A (CcpA).</text>
</comment>
<comment type="miscellaneous">
    <text>S.bovis does not display glucose-6-phosphate dehydrogenase (G6PDH) and 6-phosphogluconate dehydrogenase (6PGDH) activities, indicating that it does not have the hexose monophosphate pathway.</text>
</comment>
<comment type="similarity">
    <text evidence="4">Belongs to the aldehyde dehydrogenase family.</text>
</comment>